<feature type="chain" id="PRO_0000312403" description="Small ribosomal subunit protein uS4m">
    <location>
        <begin position="1"/>
        <end position="325"/>
    </location>
</feature>
<feature type="domain" description="S4 RNA-binding" evidence="1">
    <location>
        <begin position="146"/>
        <end position="209"/>
    </location>
</feature>
<comment type="subcellular location">
    <subcellularLocation>
        <location>Mitochondrion</location>
    </subcellularLocation>
</comment>
<comment type="similarity">
    <text evidence="2">Belongs to the universal ribosomal protein uS4 family.</text>
</comment>
<keyword id="KW-0496">Mitochondrion</keyword>
<keyword id="KW-0687">Ribonucleoprotein</keyword>
<keyword id="KW-0689">Ribosomal protein</keyword>
<keyword id="KW-0694">RNA-binding</keyword>
<keyword id="KW-0699">rRNA-binding</keyword>
<proteinExistence type="inferred from homology"/>
<geneLocation type="mitochondrion"/>
<gene>
    <name type="primary">mrps4</name>
    <name type="synonym">rps4</name>
</gene>
<evidence type="ECO:0000255" key="1">
    <source>
        <dbReference type="PROSITE-ProRule" id="PRU00182"/>
    </source>
</evidence>
<evidence type="ECO:0000305" key="2"/>
<dbReference type="EMBL" id="DQ336395">
    <property type="protein sequence ID" value="ACD12712.1"/>
    <property type="molecule type" value="Genomic_DNA"/>
</dbReference>
<dbReference type="RefSeq" id="YP_003579825.1">
    <property type="nucleotide sequence ID" value="NC_007787.2"/>
</dbReference>
<dbReference type="GeneID" id="9086848"/>
<dbReference type="GO" id="GO:0005739">
    <property type="term" value="C:mitochondrion"/>
    <property type="evidence" value="ECO:0007669"/>
    <property type="project" value="UniProtKB-SubCell"/>
</dbReference>
<dbReference type="GO" id="GO:0015935">
    <property type="term" value="C:small ribosomal subunit"/>
    <property type="evidence" value="ECO:0007669"/>
    <property type="project" value="TreeGrafter"/>
</dbReference>
<dbReference type="GO" id="GO:0019843">
    <property type="term" value="F:rRNA binding"/>
    <property type="evidence" value="ECO:0007669"/>
    <property type="project" value="UniProtKB-KW"/>
</dbReference>
<dbReference type="GO" id="GO:0003735">
    <property type="term" value="F:structural constituent of ribosome"/>
    <property type="evidence" value="ECO:0007669"/>
    <property type="project" value="TreeGrafter"/>
</dbReference>
<dbReference type="GO" id="GO:0042274">
    <property type="term" value="P:ribosomal small subunit biogenesis"/>
    <property type="evidence" value="ECO:0007669"/>
    <property type="project" value="TreeGrafter"/>
</dbReference>
<dbReference type="CDD" id="cd00165">
    <property type="entry name" value="S4"/>
    <property type="match status" value="1"/>
</dbReference>
<dbReference type="FunFam" id="3.10.290.10:FF:000001">
    <property type="entry name" value="30S ribosomal protein S4"/>
    <property type="match status" value="1"/>
</dbReference>
<dbReference type="Gene3D" id="1.10.1050.10">
    <property type="entry name" value="Ribosomal Protein S4 Delta 41, Chain A, domain 1"/>
    <property type="match status" value="1"/>
</dbReference>
<dbReference type="Gene3D" id="3.10.290.10">
    <property type="entry name" value="RNA-binding S4 domain"/>
    <property type="match status" value="1"/>
</dbReference>
<dbReference type="InterPro" id="IPR022801">
    <property type="entry name" value="Ribosomal_uS4"/>
</dbReference>
<dbReference type="InterPro" id="IPR018079">
    <property type="entry name" value="Ribosomal_uS4_CS"/>
</dbReference>
<dbReference type="InterPro" id="IPR002942">
    <property type="entry name" value="S4_RNA-bd"/>
</dbReference>
<dbReference type="InterPro" id="IPR036986">
    <property type="entry name" value="S4_RNA-bd_sf"/>
</dbReference>
<dbReference type="PANTHER" id="PTHR11831">
    <property type="entry name" value="30S 40S RIBOSOMAL PROTEIN"/>
    <property type="match status" value="1"/>
</dbReference>
<dbReference type="PANTHER" id="PTHR11831:SF4">
    <property type="entry name" value="SMALL RIBOSOMAL SUBUNIT PROTEIN US4M"/>
    <property type="match status" value="1"/>
</dbReference>
<dbReference type="Pfam" id="PF01479">
    <property type="entry name" value="S4"/>
    <property type="match status" value="1"/>
</dbReference>
<dbReference type="SMART" id="SM00363">
    <property type="entry name" value="S4"/>
    <property type="match status" value="1"/>
</dbReference>
<dbReference type="SUPFAM" id="SSF55174">
    <property type="entry name" value="Alpha-L RNA-binding motif"/>
    <property type="match status" value="1"/>
</dbReference>
<dbReference type="PROSITE" id="PS00632">
    <property type="entry name" value="RIBOSOMAL_S4"/>
    <property type="match status" value="1"/>
</dbReference>
<dbReference type="PROSITE" id="PS50889">
    <property type="entry name" value="S4"/>
    <property type="match status" value="1"/>
</dbReference>
<sequence>MRIRKNITKFIKRAYIDMGELKQVKGYTKTRLNIISNKVFLLKQELYPLKKQKKVGKLKKKRVTTYTRKKLKRILSLLFRIGGKIYRRKIKKKKINLKKKEEHFTNNLILYRLFRKFYINLKLKQFKRLYKKYKGNEKIIIQQLEKRIDMILLRSGFVRSIYEARQLINHKHILVNGNIARIPSYTLNVGDIISIKEGSHKQNLIHRLKKILLPKVVPEHKKNLIHRFVSKGMDKYKYNYKQKYQPNDKAKYQQNYKYQAKRRRESKKKRRIRATGPKYLEISHALLLISLIEEPKLTAIKYPFTLQPENNIKFISLLNKYKRIR</sequence>
<name>RT04_DICCI</name>
<organism>
    <name type="scientific">Dictyostelium citrinum</name>
    <name type="common">Slime mold</name>
    <dbReference type="NCBI Taxonomy" id="361072"/>
    <lineage>
        <taxon>Eukaryota</taxon>
        <taxon>Amoebozoa</taxon>
        <taxon>Evosea</taxon>
        <taxon>Eumycetozoa</taxon>
        <taxon>Dictyostelia</taxon>
        <taxon>Dictyosteliales</taxon>
        <taxon>Dictyosteliaceae</taxon>
        <taxon>Dictyostelium</taxon>
    </lineage>
</organism>
<accession>P0C5Y3</accession>
<accession>B2VQ40</accession>
<reference key="1">
    <citation type="journal article" date="2008" name="Mol. Biol. Evol.">
        <title>Mitochondrial genome evolution in the social amoebae.</title>
        <authorList>
            <person name="Heidel A.J."/>
            <person name="Gloeckner G."/>
        </authorList>
    </citation>
    <scope>NUCLEOTIDE SEQUENCE [LARGE SCALE GENOMIC DNA]</scope>
</reference>
<protein>
    <recommendedName>
        <fullName evidence="2">Small ribosomal subunit protein uS4m</fullName>
    </recommendedName>
    <alternativeName>
        <fullName>Ribosomal protein S4, mitochondrial</fullName>
    </alternativeName>
</protein>